<sequence>MYLSRFLSIHALWVTVSSVMQPYLFVWGHYDVCKSLIYTEEGKVWDYTACQPESTDMTKYLKVKLDPPDITCGDPPESFCAMGNPYMCNNECDASTPELAHPPELMFDFEGRHPSTFWQSATWKEYPKPLQVNITLSWSKTIELTDNIVITFESGRPDQMILEKSLDYGRTWQPYQYYATDCLHAFHMDPKSVKDLSQHTVLEIICTEEYSTGYSTNSKIIHFEIKDRFAFFAGPRLRNMASLYGQLDTTKKLRDFFTVTDLRIRLLRPAVGEIFVDELHLARYFYAISDIKVRGRCKCNLHATSCLYDNSKLTCECEHNTTGPDCGKCKKNYQGRPWSPGSYLPIPKGTANTCIPSISSIGNCECFGHSNRCSYIDLLNTVICVSCKHNTRGQHCELCRLGYFRNASAQLDDENVCIECYCNPLGSIHDRCNGSGFCECKTGTTGPKCDECLPGNSWYYGCQPNVCDNELLHCQNGGTCQNNVRCACPDAYTGILCEKLRCEEAGSCGSESGQGAPPRGSPALLLLTMLLGTAGPLVF</sequence>
<evidence type="ECO:0000250" key="1"/>
<evidence type="ECO:0000255" key="2"/>
<evidence type="ECO:0000255" key="3">
    <source>
        <dbReference type="PROSITE-ProRule" id="PRU00460"/>
    </source>
</evidence>
<evidence type="ECO:0000255" key="4">
    <source>
        <dbReference type="PROSITE-ProRule" id="PRU00466"/>
    </source>
</evidence>
<evidence type="ECO:0000269" key="5">
    <source>
    </source>
</evidence>
<evidence type="ECO:0000269" key="6">
    <source>
    </source>
</evidence>
<evidence type="ECO:0000269" key="7">
    <source>
    </source>
</evidence>
<evidence type="ECO:0000269" key="8">
    <source>
    </source>
</evidence>
<evidence type="ECO:0000303" key="9">
    <source>
    </source>
</evidence>
<evidence type="ECO:0000303" key="10">
    <source>
    </source>
</evidence>
<evidence type="ECO:0000303" key="11">
    <source>
    </source>
</evidence>
<evidence type="ECO:0000303" key="12">
    <source>
    </source>
</evidence>
<evidence type="ECO:0000303" key="13">
    <source>
    </source>
</evidence>
<evidence type="ECO:0000305" key="14"/>
<evidence type="ECO:0000312" key="15">
    <source>
        <dbReference type="EMBL" id="BAB12010.1"/>
    </source>
</evidence>
<proteinExistence type="evidence at protein level"/>
<organism evidence="15">
    <name type="scientific">Mus musculus</name>
    <name type="common">Mouse</name>
    <dbReference type="NCBI Taxonomy" id="10090"/>
    <lineage>
        <taxon>Eukaryota</taxon>
        <taxon>Metazoa</taxon>
        <taxon>Chordata</taxon>
        <taxon>Craniata</taxon>
        <taxon>Vertebrata</taxon>
        <taxon>Euteleostomi</taxon>
        <taxon>Mammalia</taxon>
        <taxon>Eutheria</taxon>
        <taxon>Euarchontoglires</taxon>
        <taxon>Glires</taxon>
        <taxon>Rodentia</taxon>
        <taxon>Myomorpha</taxon>
        <taxon>Muroidea</taxon>
        <taxon>Muridae</taxon>
        <taxon>Murinae</taxon>
        <taxon>Mus</taxon>
        <taxon>Mus</taxon>
    </lineage>
</organism>
<dbReference type="EMBL" id="AB038662">
    <property type="protein sequence ID" value="BAB12005.1"/>
    <property type="molecule type" value="mRNA"/>
</dbReference>
<dbReference type="EMBL" id="AB038663">
    <property type="protein sequence ID" value="BAB12006.1"/>
    <property type="molecule type" value="mRNA"/>
</dbReference>
<dbReference type="EMBL" id="AB038664">
    <property type="protein sequence ID" value="BAB12007.1"/>
    <property type="molecule type" value="mRNA"/>
</dbReference>
<dbReference type="EMBL" id="AB038665">
    <property type="protein sequence ID" value="BAB12008.1"/>
    <property type="molecule type" value="mRNA"/>
</dbReference>
<dbReference type="EMBL" id="AB038666">
    <property type="protein sequence ID" value="BAB12009.1"/>
    <property type="molecule type" value="mRNA"/>
</dbReference>
<dbReference type="EMBL" id="AB038667">
    <property type="protein sequence ID" value="BAB12010.1"/>
    <property type="molecule type" value="mRNA"/>
</dbReference>
<dbReference type="EMBL" id="AF475069">
    <property type="protein sequence ID" value="AAL84778.1"/>
    <property type="molecule type" value="mRNA"/>
</dbReference>
<dbReference type="EMBL" id="AF475070">
    <property type="protein sequence ID" value="AAL84779.1"/>
    <property type="molecule type" value="mRNA"/>
</dbReference>
<dbReference type="EMBL" id="AF475071">
    <property type="protein sequence ID" value="AAL84780.1"/>
    <property type="molecule type" value="mRNA"/>
</dbReference>
<dbReference type="EMBL" id="AF475072">
    <property type="protein sequence ID" value="AAL84781.1"/>
    <property type="molecule type" value="mRNA"/>
</dbReference>
<dbReference type="EMBL" id="AF475073">
    <property type="protein sequence ID" value="AAL84782.1"/>
    <property type="molecule type" value="mRNA"/>
</dbReference>
<dbReference type="EMBL" id="AF475074">
    <property type="protein sequence ID" value="AAL84783.1"/>
    <property type="molecule type" value="mRNA"/>
</dbReference>
<dbReference type="EMBL" id="AF475075">
    <property type="protein sequence ID" value="AAL84784.1"/>
    <property type="molecule type" value="mRNA"/>
</dbReference>
<dbReference type="EMBL" id="AF475076">
    <property type="protein sequence ID" value="AAL84785.1"/>
    <property type="molecule type" value="mRNA"/>
</dbReference>
<dbReference type="EMBL" id="AF475077">
    <property type="protein sequence ID" value="AAL84786.1"/>
    <property type="molecule type" value="mRNA"/>
</dbReference>
<dbReference type="EMBL" id="AF475078">
    <property type="protein sequence ID" value="AAL84787.1"/>
    <property type="molecule type" value="mRNA"/>
</dbReference>
<dbReference type="EMBL" id="AK034465">
    <property type="protein sequence ID" value="BAC28717.1"/>
    <property type="molecule type" value="mRNA"/>
</dbReference>
<dbReference type="EMBL" id="AK173075">
    <property type="protein sequence ID" value="BAD32353.1"/>
    <property type="status" value="ALT_INIT"/>
    <property type="molecule type" value="mRNA"/>
</dbReference>
<dbReference type="EMBL" id="BC079881">
    <property type="protein sequence ID" value="AAH79881.1"/>
    <property type="molecule type" value="mRNA"/>
</dbReference>
<dbReference type="CCDS" id="CCDS38604.1">
    <molecule id="Q8R4G0-1"/>
</dbReference>
<dbReference type="CCDS" id="CCDS59651.1">
    <molecule id="Q8R4G0-3"/>
</dbReference>
<dbReference type="CCDS" id="CCDS59652.1">
    <molecule id="Q8R4G0-2"/>
</dbReference>
<dbReference type="CCDS" id="CCDS59653.1">
    <molecule id="Q8R4G0-5"/>
</dbReference>
<dbReference type="CCDS" id="CCDS59654.1">
    <molecule id="Q8R4G0-4"/>
</dbReference>
<dbReference type="RefSeq" id="NP_001156820.1">
    <molecule id="Q8R4G0-2"/>
    <property type="nucleotide sequence ID" value="NM_001163348.1"/>
</dbReference>
<dbReference type="RefSeq" id="NP_001156821.1">
    <molecule id="Q8R4G0-3"/>
    <property type="nucleotide sequence ID" value="NM_001163349.1"/>
</dbReference>
<dbReference type="RefSeq" id="NP_001156822.1">
    <molecule id="Q8R4G0-4"/>
    <property type="nucleotide sequence ID" value="NM_001163350.1"/>
</dbReference>
<dbReference type="RefSeq" id="NP_001156823.1">
    <property type="nucleotide sequence ID" value="NM_001163351.1"/>
</dbReference>
<dbReference type="RefSeq" id="NP_109624.1">
    <molecule id="Q8R4G0-1"/>
    <property type="nucleotide sequence ID" value="NM_030699.2"/>
</dbReference>
<dbReference type="RefSeq" id="NP_597995.1">
    <molecule id="Q8R4G0-5"/>
    <property type="nucleotide sequence ID" value="NM_133488.1"/>
</dbReference>
<dbReference type="RefSeq" id="XP_011238597.1">
    <molecule id="Q8R4G0-7"/>
    <property type="nucleotide sequence ID" value="XM_011240295.4"/>
</dbReference>
<dbReference type="SMR" id="Q8R4G0"/>
<dbReference type="BioGRID" id="219827">
    <property type="interactions" value="1"/>
</dbReference>
<dbReference type="FunCoup" id="Q8R4G0">
    <property type="interactions" value="594"/>
</dbReference>
<dbReference type="IntAct" id="Q8R4G0">
    <property type="interactions" value="1"/>
</dbReference>
<dbReference type="STRING" id="10090.ENSMUSP00000072397"/>
<dbReference type="GlyConnect" id="2532">
    <property type="glycosylation" value="2 N-Linked glycans (2 sites)"/>
</dbReference>
<dbReference type="GlyCosmos" id="Q8R4G0">
    <property type="glycosylation" value="4 sites, 2 glycans"/>
</dbReference>
<dbReference type="GlyGen" id="Q8R4G0">
    <property type="glycosylation" value="5 sites, 7 N-linked glycans (5 sites)"/>
</dbReference>
<dbReference type="iPTMnet" id="Q8R4G0"/>
<dbReference type="PhosphoSitePlus" id="Q8R4G0"/>
<dbReference type="SwissPalm" id="Q8R4G0"/>
<dbReference type="PaxDb" id="10090-ENSMUSP00000072397"/>
<dbReference type="ProteomicsDB" id="293758">
    <molecule id="Q8R4G0-1"/>
</dbReference>
<dbReference type="ProteomicsDB" id="293759">
    <molecule id="Q8R4G0-2"/>
</dbReference>
<dbReference type="ProteomicsDB" id="293760">
    <molecule id="Q8R4G0-3"/>
</dbReference>
<dbReference type="ProteomicsDB" id="293761">
    <molecule id="Q8R4G0-4"/>
</dbReference>
<dbReference type="ProteomicsDB" id="293762">
    <molecule id="Q8R4G0-5"/>
</dbReference>
<dbReference type="ProteomicsDB" id="293763">
    <molecule id="Q8R4G0-6"/>
</dbReference>
<dbReference type="ProteomicsDB" id="293764">
    <molecule id="Q8R4G0-7"/>
</dbReference>
<dbReference type="ProteomicsDB" id="293765">
    <molecule id="Q8R4G0-8"/>
</dbReference>
<dbReference type="ProteomicsDB" id="293766">
    <molecule id="Q8R4G0-9"/>
</dbReference>
<dbReference type="ProteomicsDB" id="293767">
    <molecule id="Q8R4G0-10"/>
</dbReference>
<dbReference type="Antibodypedia" id="33720">
    <property type="antibodies" value="160 antibodies from 29 providers"/>
</dbReference>
<dbReference type="DNASU" id="80883"/>
<dbReference type="Ensembl" id="ENSMUST00000072596.12">
    <molecule id="Q8R4G0-1"/>
    <property type="protein sequence ID" value="ENSMUSP00000072397.6"/>
    <property type="gene ID" value="ENSMUSG00000059857.17"/>
</dbReference>
<dbReference type="Ensembl" id="ENSMUST00000131027.9">
    <molecule id="Q8R4G0-7"/>
    <property type="protein sequence ID" value="ENSMUSP00000118800.3"/>
    <property type="gene ID" value="ENSMUSG00000059857.17"/>
</dbReference>
<dbReference type="Ensembl" id="ENSMUST00000133268.9">
    <molecule id="Q8R4G0-3"/>
    <property type="protein sequence ID" value="ENSMUSP00000117371.3"/>
    <property type="gene ID" value="ENSMUSG00000059857.17"/>
</dbReference>
<dbReference type="Ensembl" id="ENSMUST00000138344.9">
    <molecule id="Q8R4G0-2"/>
    <property type="protein sequence ID" value="ENSMUSP00000120688.3"/>
    <property type="gene ID" value="ENSMUSG00000059857.17"/>
</dbReference>
<dbReference type="Ensembl" id="ENSMUST00000138953.9">
    <molecule id="Q8R4G0-4"/>
    <property type="protein sequence ID" value="ENSMUSP00000116213.3"/>
    <property type="gene ID" value="ENSMUSG00000059857.17"/>
</dbReference>
<dbReference type="Ensembl" id="ENSMUST00000156177.9">
    <molecule id="Q8R4G0-5"/>
    <property type="protein sequence ID" value="ENSMUSP00000119534.3"/>
    <property type="gene ID" value="ENSMUSG00000059857.17"/>
</dbReference>
<dbReference type="GeneID" id="80883"/>
<dbReference type="KEGG" id="mmu:80883"/>
<dbReference type="UCSC" id="uc008rai.2">
    <molecule id="Q8R4G0-7"/>
    <property type="organism name" value="mouse"/>
</dbReference>
<dbReference type="UCSC" id="uc008raj.2">
    <molecule id="Q8R4G0-2"/>
    <property type="organism name" value="mouse"/>
</dbReference>
<dbReference type="UCSC" id="uc008rak.2">
    <molecule id="Q8R4G0-4"/>
    <property type="organism name" value="mouse"/>
</dbReference>
<dbReference type="UCSC" id="uc008ral.2">
    <molecule id="Q8R4G0-1"/>
    <property type="organism name" value="mouse"/>
</dbReference>
<dbReference type="UCSC" id="uc008ram.2">
    <molecule id="Q8R4G0-3"/>
    <property type="organism name" value="mouse"/>
</dbReference>
<dbReference type="UCSC" id="uc008rao.2">
    <molecule id="Q8R4G0-5"/>
    <property type="organism name" value="mouse"/>
</dbReference>
<dbReference type="UCSC" id="uc008rap.1">
    <molecule id="Q8R4G0-8"/>
    <property type="organism name" value="mouse"/>
</dbReference>
<dbReference type="UCSC" id="uc008raq.1">
    <molecule id="Q8R4G0-9"/>
    <property type="organism name" value="mouse"/>
</dbReference>
<dbReference type="UCSC" id="uc008rar.2">
    <molecule id="Q8R4G0-6"/>
    <property type="organism name" value="mouse"/>
</dbReference>
<dbReference type="AGR" id="MGI:1934028"/>
<dbReference type="CTD" id="22854"/>
<dbReference type="MGI" id="MGI:1934028">
    <property type="gene designation" value="Ntng1"/>
</dbReference>
<dbReference type="VEuPathDB" id="HostDB:ENSMUSG00000059857"/>
<dbReference type="eggNOG" id="KOG1836">
    <property type="taxonomic scope" value="Eukaryota"/>
</dbReference>
<dbReference type="eggNOG" id="KOG3512">
    <property type="taxonomic scope" value="Eukaryota"/>
</dbReference>
<dbReference type="GeneTree" id="ENSGT00940000153601"/>
<dbReference type="HOGENOM" id="CLU_039838_1_1_1"/>
<dbReference type="InParanoid" id="Q8R4G0"/>
<dbReference type="OrthoDB" id="9981301at2759"/>
<dbReference type="PhylomeDB" id="Q8R4G0"/>
<dbReference type="BioGRID-ORCS" id="80883">
    <property type="hits" value="2 hits in 77 CRISPR screens"/>
</dbReference>
<dbReference type="ChiTaRS" id="Ntng1">
    <property type="organism name" value="mouse"/>
</dbReference>
<dbReference type="PRO" id="PR:Q8R4G0"/>
<dbReference type="Proteomes" id="UP000000589">
    <property type="component" value="Chromosome 3"/>
</dbReference>
<dbReference type="RNAct" id="Q8R4G0">
    <property type="molecule type" value="protein"/>
</dbReference>
<dbReference type="Bgee" id="ENSMUSG00000059857">
    <property type="expression patterns" value="Expressed in medial dorsal nucleus of thalamus and 157 other cell types or tissues"/>
</dbReference>
<dbReference type="ExpressionAtlas" id="Q8R4G0">
    <property type="expression patterns" value="baseline and differential"/>
</dbReference>
<dbReference type="GO" id="GO:0098978">
    <property type="term" value="C:glutamatergic synapse"/>
    <property type="evidence" value="ECO:0000314"/>
    <property type="project" value="SynGO"/>
</dbReference>
<dbReference type="GO" id="GO:0005886">
    <property type="term" value="C:plasma membrane"/>
    <property type="evidence" value="ECO:0000314"/>
    <property type="project" value="UniProtKB"/>
</dbReference>
<dbReference type="GO" id="GO:0048787">
    <property type="term" value="C:presynaptic active zone membrane"/>
    <property type="evidence" value="ECO:0000314"/>
    <property type="project" value="SynGO"/>
</dbReference>
<dbReference type="GO" id="GO:0098685">
    <property type="term" value="C:Schaffer collateral - CA1 synapse"/>
    <property type="evidence" value="ECO:0000314"/>
    <property type="project" value="SynGO"/>
</dbReference>
<dbReference type="GO" id="GO:0098552">
    <property type="term" value="C:side of membrane"/>
    <property type="evidence" value="ECO:0007669"/>
    <property type="project" value="UniProtKB-KW"/>
</dbReference>
<dbReference type="GO" id="GO:0098632">
    <property type="term" value="F:cell-cell adhesion mediator activity"/>
    <property type="evidence" value="ECO:0007669"/>
    <property type="project" value="Ensembl"/>
</dbReference>
<dbReference type="GO" id="GO:0007409">
    <property type="term" value="P:axonogenesis"/>
    <property type="evidence" value="ECO:0000314"/>
    <property type="project" value="MGI"/>
</dbReference>
<dbReference type="GO" id="GO:0050804">
    <property type="term" value="P:modulation of chemical synaptic transmission"/>
    <property type="evidence" value="ECO:0000314"/>
    <property type="project" value="SynGO"/>
</dbReference>
<dbReference type="GO" id="GO:2001222">
    <property type="term" value="P:regulation of neuron migration"/>
    <property type="evidence" value="ECO:0000315"/>
    <property type="project" value="UniProtKB"/>
</dbReference>
<dbReference type="GO" id="GO:0150011">
    <property type="term" value="P:regulation of neuron projection arborization"/>
    <property type="evidence" value="ECO:0000315"/>
    <property type="project" value="UniProtKB"/>
</dbReference>
<dbReference type="GO" id="GO:0010975">
    <property type="term" value="P:regulation of neuron projection development"/>
    <property type="evidence" value="ECO:0000315"/>
    <property type="project" value="UniProtKB"/>
</dbReference>
<dbReference type="GO" id="GO:0099560">
    <property type="term" value="P:synaptic membrane adhesion"/>
    <property type="evidence" value="ECO:0000314"/>
    <property type="project" value="SynGO"/>
</dbReference>
<dbReference type="CDD" id="cd00055">
    <property type="entry name" value="EGF_Lam"/>
    <property type="match status" value="3"/>
</dbReference>
<dbReference type="FunFam" id="2.10.25.10:FF:000085">
    <property type="entry name" value="Netrin G1"/>
    <property type="match status" value="1"/>
</dbReference>
<dbReference type="FunFam" id="2.10.25.10:FF:000112">
    <property type="entry name" value="Netrin G1"/>
    <property type="match status" value="1"/>
</dbReference>
<dbReference type="FunFam" id="2.10.25.10:FF:000502">
    <property type="entry name" value="Netrin G1"/>
    <property type="match status" value="1"/>
</dbReference>
<dbReference type="FunFam" id="2.60.120.260:FF:000005">
    <property type="entry name" value="Netrin G1"/>
    <property type="match status" value="1"/>
</dbReference>
<dbReference type="FunFam" id="2.10.25.10:FF:000180">
    <property type="entry name" value="Netrin G2"/>
    <property type="match status" value="1"/>
</dbReference>
<dbReference type="Gene3D" id="2.60.120.260">
    <property type="entry name" value="Galactose-binding domain-like"/>
    <property type="match status" value="1"/>
</dbReference>
<dbReference type="Gene3D" id="2.10.25.10">
    <property type="entry name" value="Laminin"/>
    <property type="match status" value="4"/>
</dbReference>
<dbReference type="InterPro" id="IPR000742">
    <property type="entry name" value="EGF-like_dom"/>
</dbReference>
<dbReference type="InterPro" id="IPR050440">
    <property type="entry name" value="Laminin/Netrin_ECM"/>
</dbReference>
<dbReference type="InterPro" id="IPR008211">
    <property type="entry name" value="Laminin_N"/>
</dbReference>
<dbReference type="InterPro" id="IPR002049">
    <property type="entry name" value="LE_dom"/>
</dbReference>
<dbReference type="InterPro" id="IPR056863">
    <property type="entry name" value="LMN_ATRN_NET-like_EGF"/>
</dbReference>
<dbReference type="PANTHER" id="PTHR10574:SF28">
    <property type="entry name" value="NETRIN-G1"/>
    <property type="match status" value="1"/>
</dbReference>
<dbReference type="PANTHER" id="PTHR10574">
    <property type="entry name" value="NETRIN/LAMININ-RELATED"/>
    <property type="match status" value="1"/>
</dbReference>
<dbReference type="Pfam" id="PF00053">
    <property type="entry name" value="EGF_laminin"/>
    <property type="match status" value="1"/>
</dbReference>
<dbReference type="Pfam" id="PF24973">
    <property type="entry name" value="EGF_LMN_ATRN"/>
    <property type="match status" value="2"/>
</dbReference>
<dbReference type="Pfam" id="PF00055">
    <property type="entry name" value="Laminin_N"/>
    <property type="match status" value="1"/>
</dbReference>
<dbReference type="SMART" id="SM00181">
    <property type="entry name" value="EGF"/>
    <property type="match status" value="3"/>
</dbReference>
<dbReference type="SMART" id="SM00180">
    <property type="entry name" value="EGF_Lam"/>
    <property type="match status" value="3"/>
</dbReference>
<dbReference type="SMART" id="SM00136">
    <property type="entry name" value="LamNT"/>
    <property type="match status" value="1"/>
</dbReference>
<dbReference type="SUPFAM" id="SSF57196">
    <property type="entry name" value="EGF/Laminin"/>
    <property type="match status" value="2"/>
</dbReference>
<dbReference type="PROSITE" id="PS00022">
    <property type="entry name" value="EGF_1"/>
    <property type="match status" value="3"/>
</dbReference>
<dbReference type="PROSITE" id="PS50026">
    <property type="entry name" value="EGF_3"/>
    <property type="match status" value="1"/>
</dbReference>
<dbReference type="PROSITE" id="PS01248">
    <property type="entry name" value="EGF_LAM_1"/>
    <property type="match status" value="1"/>
</dbReference>
<dbReference type="PROSITE" id="PS50027">
    <property type="entry name" value="EGF_LAM_2"/>
    <property type="match status" value="3"/>
</dbReference>
<dbReference type="PROSITE" id="PS51117">
    <property type="entry name" value="LAMININ_NTER"/>
    <property type="match status" value="1"/>
</dbReference>
<gene>
    <name type="primary">Ntng1</name>
    <name type="synonym">Kiaa0976</name>
    <name type="synonym">Lmnt1</name>
</gene>
<protein>
    <recommendedName>
        <fullName>Netrin-G1</fullName>
    </recommendedName>
    <alternativeName>
        <fullName>Laminet-1</fullName>
    </alternativeName>
</protein>
<feature type="signal peptide" evidence="2">
    <location>
        <begin position="1"/>
        <end position="18"/>
    </location>
</feature>
<feature type="chain" id="PRO_0000017093" description="Netrin-G1">
    <location>
        <begin position="19"/>
        <end position="510"/>
    </location>
</feature>
<feature type="propeptide" id="PRO_0000017094" description="Removed in mature form" evidence="2">
    <location>
        <begin position="511"/>
        <end position="539"/>
    </location>
</feature>
<feature type="domain" description="Laminin N-terminal" evidence="4">
    <location>
        <begin position="46"/>
        <end position="296"/>
    </location>
</feature>
<feature type="domain" description="Laminin EGF-like 1" evidence="3">
    <location>
        <begin position="297"/>
        <end position="356"/>
    </location>
</feature>
<feature type="domain" description="Laminin EGF-like 2" evidence="3">
    <location>
        <begin position="364"/>
        <end position="419"/>
    </location>
</feature>
<feature type="domain" description="Laminin EGF-like 3" evidence="3">
    <location>
        <begin position="420"/>
        <end position="469"/>
    </location>
</feature>
<feature type="region of interest" description="NGL discriminant loop I" evidence="1">
    <location>
        <begin position="80"/>
        <end position="91"/>
    </location>
</feature>
<feature type="region of interest" description="NGL discriminant loop II" evidence="1">
    <location>
        <begin position="208"/>
        <end position="214"/>
    </location>
</feature>
<feature type="region of interest" description="NGL discriminant loop III" evidence="1">
    <location>
        <begin position="273"/>
        <end position="275"/>
    </location>
</feature>
<feature type="lipid moiety-binding region" description="GPI-anchor amidated serine" evidence="2">
    <location>
        <position position="510"/>
    </location>
</feature>
<feature type="glycosylation site" description="N-linked (GlcNAc...) asparagine" evidence="2">
    <location>
        <position position="133"/>
    </location>
</feature>
<feature type="glycosylation site" description="N-linked (GlcNAc...) asparagine" evidence="2">
    <location>
        <position position="320"/>
    </location>
</feature>
<feature type="glycosylation site" description="N-linked (GlcNAc...) asparagine" evidence="2">
    <location>
        <position position="406"/>
    </location>
</feature>
<feature type="glycosylation site" description="N-linked (GlcNAc...) asparagine" evidence="2">
    <location>
        <position position="433"/>
    </location>
</feature>
<feature type="disulfide bond" evidence="1">
    <location>
        <begin position="33"/>
        <end position="50"/>
    </location>
</feature>
<feature type="disulfide bond" evidence="1">
    <location>
        <begin position="72"/>
        <end position="92"/>
    </location>
</feature>
<feature type="disulfide bond" evidence="1">
    <location>
        <begin position="80"/>
        <end position="88"/>
    </location>
</feature>
<feature type="disulfide bond" evidence="1">
    <location>
        <begin position="182"/>
        <end position="206"/>
    </location>
</feature>
<feature type="disulfide bond" evidence="2">
    <location>
        <begin position="297"/>
        <end position="306"/>
    </location>
</feature>
<feature type="disulfide bond" evidence="2">
    <location>
        <begin position="299"/>
        <end position="315"/>
    </location>
</feature>
<feature type="disulfide bond" evidence="2">
    <location>
        <begin position="317"/>
        <end position="326"/>
    </location>
</feature>
<feature type="disulfide bond" evidence="2">
    <location>
        <begin position="329"/>
        <end position="354"/>
    </location>
</feature>
<feature type="disulfide bond" evidence="2">
    <location>
        <begin position="364"/>
        <end position="373"/>
    </location>
</feature>
<feature type="disulfide bond" evidence="2">
    <location>
        <begin position="366"/>
        <end position="384"/>
    </location>
</feature>
<feature type="disulfide bond" evidence="2">
    <location>
        <begin position="387"/>
        <end position="396"/>
    </location>
</feature>
<feature type="disulfide bond" evidence="2">
    <location>
        <begin position="399"/>
        <end position="417"/>
    </location>
</feature>
<feature type="disulfide bond" evidence="2">
    <location>
        <begin position="420"/>
        <end position="432"/>
    </location>
</feature>
<feature type="disulfide bond" evidence="2">
    <location>
        <begin position="422"/>
        <end position="438"/>
    </location>
</feature>
<feature type="disulfide bond" evidence="2">
    <location>
        <begin position="440"/>
        <end position="449"/>
    </location>
</feature>
<feature type="disulfide bond" evidence="2">
    <location>
        <begin position="452"/>
        <end position="462"/>
    </location>
</feature>
<feature type="disulfide bond" evidence="1">
    <location>
        <begin position="488"/>
        <end position="497"/>
    </location>
</feature>
<feature type="splice variant" id="VSP_050546" description="In isoform 1J." evidence="10">
    <location>
        <begin position="297"/>
        <end position="539"/>
    </location>
</feature>
<feature type="splice variant" id="VSP_050551" description="In isoform 1D." evidence="9 10">
    <original>NCECFGHSNRCSYIDLLNTVICVSCKHNTRGQHCELCRLGYFRNASAQLDDENVCIECYCNPLGSIHDRCNGSGFCECKTGTTGPKCDECLPGNSWYYGCQP</original>
    <variation>TPPKFNRIWPNISSLEVSNPKQVAPKLALSTVSSVQVANHKRA</variation>
    <location>
        <begin position="363"/>
        <end position="464"/>
    </location>
</feature>
<feature type="splice variant" id="VSP_050549" description="In isoform 1C." evidence="9 10 11 12">
    <location>
        <begin position="363"/>
        <end position="463"/>
    </location>
</feature>
<feature type="splice variant" id="VSP_050547" description="In isoform 1B." evidence="9 10">
    <location>
        <begin position="363"/>
        <end position="418"/>
    </location>
</feature>
<feature type="splice variant" id="VSP_050556" description="In isoform 1I." evidence="10">
    <original>NCECFGHSNRCSYIDLLNTVICVSCK</original>
    <variation>TPPKFNRIWPNISSLEVSNPKQGRSI</variation>
    <location>
        <begin position="363"/>
        <end position="388"/>
    </location>
</feature>
<feature type="splice variant" id="VSP_050552" description="In isoform 1E." evidence="9 10 13">
    <original>NCECFGHSNRCSYIDLLNTVICV</original>
    <variation>TPPKFNRIWPNISSLEVSNPKQA</variation>
    <location>
        <begin position="363"/>
        <end position="385"/>
    </location>
</feature>
<feature type="splice variant" id="VSP_050554" description="In isoform 1F." evidence="9 10">
    <original>NC</original>
    <variation>SK</variation>
    <location>
        <begin position="363"/>
        <end position="364"/>
    </location>
</feature>
<feature type="splice variant" id="VSP_050555" description="In isoform 1F." evidence="9 10">
    <location>
        <begin position="365"/>
        <end position="539"/>
    </location>
</feature>
<feature type="splice variant" id="VSP_050553" description="In isoform 1E." evidence="9 10 13">
    <location>
        <begin position="386"/>
        <end position="464"/>
    </location>
</feature>
<feature type="splice variant" id="VSP_050557" description="In isoform 1I." evidence="10">
    <location>
        <begin position="389"/>
        <end position="539"/>
    </location>
</feature>
<feature type="splice variant" id="VSP_050558" description="In isoform 1G." evidence="10">
    <location>
        <begin position="419"/>
        <end position="463"/>
    </location>
</feature>
<feature type="splice variant" id="VSP_050560" description="In isoform 1H." evidence="10">
    <original>ECYCNPLGSIHDRCNGSGFC</original>
    <variation>GQFHYDFSFCSVPLELWGAG</variation>
    <location>
        <begin position="419"/>
        <end position="438"/>
    </location>
</feature>
<feature type="splice variant" id="VSP_050548" description="In isoform 1B." evidence="9 10">
    <original>E</original>
    <variation>K</variation>
    <location>
        <position position="419"/>
    </location>
</feature>
<feature type="splice variant" id="VSP_050561" description="In isoform 1H." evidence="10">
    <location>
        <begin position="439"/>
        <end position="539"/>
    </location>
</feature>
<feature type="splice variant" id="VSP_050550" description="In isoform 1C." evidence="9 10 11 12">
    <original>P</original>
    <variation>T</variation>
    <location>
        <position position="464"/>
    </location>
</feature>
<feature type="splice variant" id="VSP_050559" description="In isoform 1G." evidence="10">
    <original>P</original>
    <variation>A</variation>
    <location>
        <position position="464"/>
    </location>
</feature>
<feature type="sequence conflict" description="In Ref. 2; AAL84778/AAL84780/AAL84781/AAL84782/AAL84784/AAL84785/AAL84786/AAL84787." evidence="14" ref="2">
    <original>L</original>
    <variation>F</variation>
    <location>
        <position position="166"/>
    </location>
</feature>
<name>NTNG1_MOUSE</name>
<comment type="function">
    <text evidence="6 8">Involved in controlling patterning and neuronal circuit formation at the laminar, cellular, subcellular and synaptic levels. Promotes neurite outgrowth of both axons and dendrites.</text>
</comment>
<comment type="subcellular location">
    <subcellularLocation>
        <location evidence="5">Cell membrane</location>
        <topology evidence="5">Lipid-anchor</topology>
        <topology evidence="5">GPI-anchor</topology>
        <orientation evidence="5">Extracellular side</orientation>
    </subcellularLocation>
</comment>
<comment type="alternative products">
    <event type="alternative splicing"/>
    <isoform>
        <id>Q8R4G0-1</id>
        <name evidence="7">1A</name>
        <name evidence="5">G1a</name>
        <sequence type="displayed"/>
    </isoform>
    <isoform>
        <id>Q8R4G0-2</id>
        <name evidence="7">1B</name>
        <name evidence="5">G1b</name>
        <sequence type="described" ref="VSP_050547 VSP_050548"/>
    </isoform>
    <isoform>
        <id>Q8R4G0-3</id>
        <name evidence="7">1C</name>
        <name evidence="5">G1c</name>
        <sequence type="described" ref="VSP_050549 VSP_050550"/>
    </isoform>
    <isoform>
        <id>Q8R4G0-4</id>
        <name evidence="7">1D</name>
        <name evidence="5">G1d</name>
        <sequence type="described" ref="VSP_050551"/>
    </isoform>
    <isoform>
        <id>Q8R4G0-5</id>
        <name evidence="7">1E</name>
        <name evidence="5">G1e</name>
        <sequence type="described" ref="VSP_050552 VSP_050553"/>
    </isoform>
    <isoform>
        <id>Q8R4G0-6</id>
        <name evidence="7">1F</name>
        <name evidence="5">G1f</name>
        <sequence type="described" ref="VSP_050554 VSP_050555"/>
    </isoform>
    <isoform>
        <id>Q8R4G0-7</id>
        <name evidence="7">1G</name>
        <sequence type="described" ref="VSP_050558 VSP_050559"/>
    </isoform>
    <isoform>
        <id>Q8R4G0-8</id>
        <name evidence="7">1H</name>
        <sequence type="described" ref="VSP_050560 VSP_050561"/>
    </isoform>
    <isoform>
        <id>Q8R4G0-9</id>
        <name evidence="7">1I</name>
        <sequence type="described" ref="VSP_050556 VSP_050557"/>
    </isoform>
    <isoform>
        <id>Q8R4G0-10</id>
        <name evidence="7">1J</name>
        <sequence type="described" ref="VSP_050546"/>
    </isoform>
</comment>
<comment type="tissue specificity">
    <text evidence="5 6 7">Expression is restricted primarily to neurons of the CNS, particularly in the dorsal thalamus, olfactory bulb and inferior colliculus. Isoform 1A and isoform 1D are the major products in adult brain.</text>
</comment>
<comment type="developmental stage">
    <text evidence="5">Detected in the midbrain and the hindbrain regions as early as 12 dpc. In the deep nucleus of the cerebellum, as well as in the inferior colliculus and the thalamic regions, expression is detected at 14 dpc, persists to postnatal day 1 and is down-regulated by postnatal day 12. At 14 dpc, expression is segmented in dorsal thalamus and pretectum in the midbrain and is regulated in a layer-specific manner in the superior colliculus. In the olfactory bulb, expression is detected at 14 dpc, increases by postnatal day 1 and is maintained at a high level through postnatal day 21 and into adulthood.</text>
</comment>
<comment type="domain">
    <text evidence="1">The laminin N-terminal domain mediates 1:1 binding to NGL ligand with sub-micromolar affinity. Three NGL-binding loops mediate discrimination for LRRC4C/NGL1 among other NGLs by binding specifically to its LRR repeats. This specificity drives the sorting of a mixed population of molecules into discrete cell surface subdomains (By similarity).</text>
</comment>
<comment type="PTM">
    <text evidence="5">N-glycosylated.</text>
</comment>
<comment type="sequence caution" evidence="14">
    <conflict type="erroneous initiation">
        <sequence resource="EMBL-CDS" id="BAD32353"/>
    </conflict>
    <text>Extended N-terminus.</text>
</comment>
<reference evidence="14" key="1">
    <citation type="journal article" date="2000" name="J. Neurosci.">
        <title>Netrin-G1: a novel glycosyl phosphatidylinositol-linked mammalian netrin that is functionally divergent from classical netrins.</title>
        <authorList>
            <person name="Nakashiba T."/>
            <person name="Ikeda T."/>
            <person name="Nishimura S."/>
            <person name="Tashiro K."/>
            <person name="Honjo T."/>
            <person name="Culotti J.G."/>
            <person name="Itohara S."/>
        </authorList>
    </citation>
    <scope>NUCLEOTIDE SEQUENCE [MRNA] (ISOFORMS 1A; 1B; 1C; 1D; 1E AND 1F)</scope>
    <scope>SUBCELLULAR LOCATION</scope>
    <scope>TISSUE SPECIFICITY</scope>
    <scope>DEVELOPMENTAL STAGE</scope>
    <scope>GLYCOSYLATION</scope>
    <source>
        <strain evidence="15">C57BL/6J</strain>
        <tissue evidence="15">Brain</tissue>
    </source>
</reference>
<reference evidence="14" key="2">
    <citation type="journal article" date="2002" name="Mol. Cell. Neurosci.">
        <title>Laminets: laminin- and netrin-related genes expressed in distinct neuronal subsets.</title>
        <authorList>
            <person name="Yin Y."/>
            <person name="Miner J.H."/>
            <person name="Sanes J.R."/>
        </authorList>
    </citation>
    <scope>NUCLEOTIDE SEQUENCE [MRNA] (ISOFORMS 1A; 1B; 1C; 1D; 1E; 1F; 1G; 1H; 1I AND 1J)</scope>
    <scope>TISSUE SPECIFICITY</scope>
    <source>
        <tissue evidence="7">Brain</tissue>
    </source>
</reference>
<reference key="3">
    <citation type="journal article" date="2005" name="Science">
        <title>The transcriptional landscape of the mammalian genome.</title>
        <authorList>
            <person name="Carninci P."/>
            <person name="Kasukawa T."/>
            <person name="Katayama S."/>
            <person name="Gough J."/>
            <person name="Frith M.C."/>
            <person name="Maeda N."/>
            <person name="Oyama R."/>
            <person name="Ravasi T."/>
            <person name="Lenhard B."/>
            <person name="Wells C."/>
            <person name="Kodzius R."/>
            <person name="Shimokawa K."/>
            <person name="Bajic V.B."/>
            <person name="Brenner S.E."/>
            <person name="Batalov S."/>
            <person name="Forrest A.R."/>
            <person name="Zavolan M."/>
            <person name="Davis M.J."/>
            <person name="Wilming L.G."/>
            <person name="Aidinis V."/>
            <person name="Allen J.E."/>
            <person name="Ambesi-Impiombato A."/>
            <person name="Apweiler R."/>
            <person name="Aturaliya R.N."/>
            <person name="Bailey T.L."/>
            <person name="Bansal M."/>
            <person name="Baxter L."/>
            <person name="Beisel K.W."/>
            <person name="Bersano T."/>
            <person name="Bono H."/>
            <person name="Chalk A.M."/>
            <person name="Chiu K.P."/>
            <person name="Choudhary V."/>
            <person name="Christoffels A."/>
            <person name="Clutterbuck D.R."/>
            <person name="Crowe M.L."/>
            <person name="Dalla E."/>
            <person name="Dalrymple B.P."/>
            <person name="de Bono B."/>
            <person name="Della Gatta G."/>
            <person name="di Bernardo D."/>
            <person name="Down T."/>
            <person name="Engstrom P."/>
            <person name="Fagiolini M."/>
            <person name="Faulkner G."/>
            <person name="Fletcher C.F."/>
            <person name="Fukushima T."/>
            <person name="Furuno M."/>
            <person name="Futaki S."/>
            <person name="Gariboldi M."/>
            <person name="Georgii-Hemming P."/>
            <person name="Gingeras T.R."/>
            <person name="Gojobori T."/>
            <person name="Green R.E."/>
            <person name="Gustincich S."/>
            <person name="Harbers M."/>
            <person name="Hayashi Y."/>
            <person name="Hensch T.K."/>
            <person name="Hirokawa N."/>
            <person name="Hill D."/>
            <person name="Huminiecki L."/>
            <person name="Iacono M."/>
            <person name="Ikeo K."/>
            <person name="Iwama A."/>
            <person name="Ishikawa T."/>
            <person name="Jakt M."/>
            <person name="Kanapin A."/>
            <person name="Katoh M."/>
            <person name="Kawasawa Y."/>
            <person name="Kelso J."/>
            <person name="Kitamura H."/>
            <person name="Kitano H."/>
            <person name="Kollias G."/>
            <person name="Krishnan S.P."/>
            <person name="Kruger A."/>
            <person name="Kummerfeld S.K."/>
            <person name="Kurochkin I.V."/>
            <person name="Lareau L.F."/>
            <person name="Lazarevic D."/>
            <person name="Lipovich L."/>
            <person name="Liu J."/>
            <person name="Liuni S."/>
            <person name="McWilliam S."/>
            <person name="Madan Babu M."/>
            <person name="Madera M."/>
            <person name="Marchionni L."/>
            <person name="Matsuda H."/>
            <person name="Matsuzawa S."/>
            <person name="Miki H."/>
            <person name="Mignone F."/>
            <person name="Miyake S."/>
            <person name="Morris K."/>
            <person name="Mottagui-Tabar S."/>
            <person name="Mulder N."/>
            <person name="Nakano N."/>
            <person name="Nakauchi H."/>
            <person name="Ng P."/>
            <person name="Nilsson R."/>
            <person name="Nishiguchi S."/>
            <person name="Nishikawa S."/>
            <person name="Nori F."/>
            <person name="Ohara O."/>
            <person name="Okazaki Y."/>
            <person name="Orlando V."/>
            <person name="Pang K.C."/>
            <person name="Pavan W.J."/>
            <person name="Pavesi G."/>
            <person name="Pesole G."/>
            <person name="Petrovsky N."/>
            <person name="Piazza S."/>
            <person name="Reed J."/>
            <person name="Reid J.F."/>
            <person name="Ring B.Z."/>
            <person name="Ringwald M."/>
            <person name="Rost B."/>
            <person name="Ruan Y."/>
            <person name="Salzberg S.L."/>
            <person name="Sandelin A."/>
            <person name="Schneider C."/>
            <person name="Schoenbach C."/>
            <person name="Sekiguchi K."/>
            <person name="Semple C.A."/>
            <person name="Seno S."/>
            <person name="Sessa L."/>
            <person name="Sheng Y."/>
            <person name="Shibata Y."/>
            <person name="Shimada H."/>
            <person name="Shimada K."/>
            <person name="Silva D."/>
            <person name="Sinclair B."/>
            <person name="Sperling S."/>
            <person name="Stupka E."/>
            <person name="Sugiura K."/>
            <person name="Sultana R."/>
            <person name="Takenaka Y."/>
            <person name="Taki K."/>
            <person name="Tammoja K."/>
            <person name="Tan S.L."/>
            <person name="Tang S."/>
            <person name="Taylor M.S."/>
            <person name="Tegner J."/>
            <person name="Teichmann S.A."/>
            <person name="Ueda H.R."/>
            <person name="van Nimwegen E."/>
            <person name="Verardo R."/>
            <person name="Wei C.L."/>
            <person name="Yagi K."/>
            <person name="Yamanishi H."/>
            <person name="Zabarovsky E."/>
            <person name="Zhu S."/>
            <person name="Zimmer A."/>
            <person name="Hide W."/>
            <person name="Bult C."/>
            <person name="Grimmond S.M."/>
            <person name="Teasdale R.D."/>
            <person name="Liu E.T."/>
            <person name="Brusic V."/>
            <person name="Quackenbush J."/>
            <person name="Wahlestedt C."/>
            <person name="Mattick J.S."/>
            <person name="Hume D.A."/>
            <person name="Kai C."/>
            <person name="Sasaki D."/>
            <person name="Tomaru Y."/>
            <person name="Fukuda S."/>
            <person name="Kanamori-Katayama M."/>
            <person name="Suzuki M."/>
            <person name="Aoki J."/>
            <person name="Arakawa T."/>
            <person name="Iida J."/>
            <person name="Imamura K."/>
            <person name="Itoh M."/>
            <person name="Kato T."/>
            <person name="Kawaji H."/>
            <person name="Kawagashira N."/>
            <person name="Kawashima T."/>
            <person name="Kojima M."/>
            <person name="Kondo S."/>
            <person name="Konno H."/>
            <person name="Nakano K."/>
            <person name="Ninomiya N."/>
            <person name="Nishio T."/>
            <person name="Okada M."/>
            <person name="Plessy C."/>
            <person name="Shibata K."/>
            <person name="Shiraki T."/>
            <person name="Suzuki S."/>
            <person name="Tagami M."/>
            <person name="Waki K."/>
            <person name="Watahiki A."/>
            <person name="Okamura-Oho Y."/>
            <person name="Suzuki H."/>
            <person name="Kawai J."/>
            <person name="Hayashizaki Y."/>
        </authorList>
    </citation>
    <scope>NUCLEOTIDE SEQUENCE [LARGE SCALE MRNA] (ISOFORM 1E)</scope>
    <source>
        <strain>C57BL/6J</strain>
        <tissue>Diencephalon</tissue>
    </source>
</reference>
<reference key="4">
    <citation type="journal article" date="2004" name="DNA Res.">
        <title>Prediction of the coding sequences of mouse homologues of KIAA gene: IV. The complete nucleotide sequences of 500 mouse KIAA-homologous cDNAs identified by screening of terminal sequences of cDNA clones randomly sampled from size-fractionated libraries.</title>
        <authorList>
            <person name="Okazaki N."/>
            <person name="Kikuno R."/>
            <person name="Ohara R."/>
            <person name="Inamoto S."/>
            <person name="Koseki H."/>
            <person name="Hiraoka S."/>
            <person name="Saga Y."/>
            <person name="Seino S."/>
            <person name="Nishimura M."/>
            <person name="Kaisho T."/>
            <person name="Hoshino K."/>
            <person name="Kitamura H."/>
            <person name="Nagase T."/>
            <person name="Ohara O."/>
            <person name="Koga H."/>
        </authorList>
    </citation>
    <scope>NUCLEOTIDE SEQUENCE [LARGE SCALE MRNA] (ISOFORM 1C)</scope>
    <source>
        <tissue>Fetal brain</tissue>
    </source>
</reference>
<reference key="5">
    <citation type="journal article" date="2004" name="Genome Res.">
        <title>The status, quality, and expansion of the NIH full-length cDNA project: the Mammalian Gene Collection (MGC).</title>
        <authorList>
            <consortium name="The MGC Project Team"/>
        </authorList>
    </citation>
    <scope>NUCLEOTIDE SEQUENCE [LARGE SCALE MRNA] (ISOFORM 1C)</scope>
    <source>
        <strain>C57BL/6J</strain>
        <tissue>Brain</tissue>
    </source>
</reference>
<reference evidence="14" key="6">
    <citation type="journal article" date="2002" name="Mech. Dev.">
        <title>Complementary expression and neurite outgrowth activity of netrin-G subfamily members.</title>
        <authorList>
            <person name="Nakashiba T."/>
            <person name="Nishimura S."/>
            <person name="Ikeda T."/>
            <person name="Itohara S."/>
        </authorList>
    </citation>
    <scope>FUNCTION</scope>
    <scope>TISSUE SPECIFICITY</scope>
</reference>
<reference key="7">
    <citation type="journal article" date="2020" name="Hum. Mutat.">
        <title>Netrin-G2 dysfunction causes a Rett-like phenotype with areflexia.</title>
        <authorList>
            <person name="Heimer G."/>
            <person name="van Woerden G.M."/>
            <person name="Barel O."/>
            <person name="Marek-Yagel D."/>
            <person name="Kol N."/>
            <person name="Munting J.B."/>
            <person name="Borghei M."/>
            <person name="Atawneh O.M."/>
            <person name="Nissenkorn A."/>
            <person name="Rechavi G."/>
            <person name="Anikster Y."/>
            <person name="Elgersma Y."/>
            <person name="Kushner S.A."/>
            <person name="Ben Zeev B."/>
        </authorList>
    </citation>
    <scope>FUNCTION</scope>
</reference>
<keyword id="KW-0025">Alternative splicing</keyword>
<keyword id="KW-1003">Cell membrane</keyword>
<keyword id="KW-0217">Developmental protein</keyword>
<keyword id="KW-0221">Differentiation</keyword>
<keyword id="KW-1015">Disulfide bond</keyword>
<keyword id="KW-0325">Glycoprotein</keyword>
<keyword id="KW-0336">GPI-anchor</keyword>
<keyword id="KW-0424">Laminin EGF-like domain</keyword>
<keyword id="KW-0449">Lipoprotein</keyword>
<keyword id="KW-0472">Membrane</keyword>
<keyword id="KW-0524">Neurogenesis</keyword>
<keyword id="KW-1185">Reference proteome</keyword>
<keyword id="KW-0677">Repeat</keyword>
<keyword id="KW-0732">Signal</keyword>
<accession>Q8R4G0</accession>
<accession>Q68FE5</accession>
<accession>Q69ZU3</accession>
<accession>Q8R4F3</accession>
<accession>Q8R4F4</accession>
<accession>Q8R4F5</accession>
<accession>Q8R4F6</accession>
<accession>Q8R4F7</accession>
<accession>Q8R4F8</accession>
<accession>Q8R4F9</accession>
<accession>Q9ESR3</accession>
<accession>Q9ESR4</accession>
<accession>Q9ESR5</accession>
<accession>Q9ESR6</accession>
<accession>Q9ESR7</accession>
<accession>Q9ESR8</accession>